<dbReference type="EC" id="3.4.21.88" evidence="1"/>
<dbReference type="EMBL" id="CP000124">
    <property type="protein sequence ID" value="ABA48742.1"/>
    <property type="status" value="ALT_INIT"/>
    <property type="molecule type" value="Genomic_DNA"/>
</dbReference>
<dbReference type="RefSeq" id="WP_004191638.1">
    <property type="nucleotide sequence ID" value="NC_007434.1"/>
</dbReference>
<dbReference type="SMR" id="Q3JSP6"/>
<dbReference type="MEROPS" id="S24.001"/>
<dbReference type="EnsemblBacteria" id="ABA48742">
    <property type="protein sequence ID" value="ABA48742"/>
    <property type="gene ID" value="BURPS1710b_2012"/>
</dbReference>
<dbReference type="GeneID" id="93060159"/>
<dbReference type="KEGG" id="bpm:BURPS1710b_2012"/>
<dbReference type="HOGENOM" id="CLU_066192_45_3_4"/>
<dbReference type="Proteomes" id="UP000002700">
    <property type="component" value="Chromosome I"/>
</dbReference>
<dbReference type="GO" id="GO:0003677">
    <property type="term" value="F:DNA binding"/>
    <property type="evidence" value="ECO:0007669"/>
    <property type="project" value="UniProtKB-UniRule"/>
</dbReference>
<dbReference type="GO" id="GO:0004252">
    <property type="term" value="F:serine-type endopeptidase activity"/>
    <property type="evidence" value="ECO:0007669"/>
    <property type="project" value="UniProtKB-UniRule"/>
</dbReference>
<dbReference type="GO" id="GO:0006281">
    <property type="term" value="P:DNA repair"/>
    <property type="evidence" value="ECO:0007669"/>
    <property type="project" value="UniProtKB-UniRule"/>
</dbReference>
<dbReference type="GO" id="GO:0006260">
    <property type="term" value="P:DNA replication"/>
    <property type="evidence" value="ECO:0007669"/>
    <property type="project" value="UniProtKB-UniRule"/>
</dbReference>
<dbReference type="GO" id="GO:0045892">
    <property type="term" value="P:negative regulation of DNA-templated transcription"/>
    <property type="evidence" value="ECO:0007669"/>
    <property type="project" value="UniProtKB-UniRule"/>
</dbReference>
<dbReference type="GO" id="GO:0006508">
    <property type="term" value="P:proteolysis"/>
    <property type="evidence" value="ECO:0007669"/>
    <property type="project" value="InterPro"/>
</dbReference>
<dbReference type="GO" id="GO:0009432">
    <property type="term" value="P:SOS response"/>
    <property type="evidence" value="ECO:0007669"/>
    <property type="project" value="UniProtKB-UniRule"/>
</dbReference>
<dbReference type="CDD" id="cd06529">
    <property type="entry name" value="S24_LexA-like"/>
    <property type="match status" value="1"/>
</dbReference>
<dbReference type="FunFam" id="1.10.10.10:FF:000009">
    <property type="entry name" value="LexA repressor"/>
    <property type="match status" value="1"/>
</dbReference>
<dbReference type="FunFam" id="2.10.109.10:FF:000001">
    <property type="entry name" value="LexA repressor"/>
    <property type="match status" value="1"/>
</dbReference>
<dbReference type="Gene3D" id="2.10.109.10">
    <property type="entry name" value="Umud Fragment, subunit A"/>
    <property type="match status" value="1"/>
</dbReference>
<dbReference type="Gene3D" id="1.10.10.10">
    <property type="entry name" value="Winged helix-like DNA-binding domain superfamily/Winged helix DNA-binding domain"/>
    <property type="match status" value="1"/>
</dbReference>
<dbReference type="HAMAP" id="MF_00015">
    <property type="entry name" value="LexA"/>
    <property type="match status" value="1"/>
</dbReference>
<dbReference type="InterPro" id="IPR006200">
    <property type="entry name" value="LexA"/>
</dbReference>
<dbReference type="InterPro" id="IPR039418">
    <property type="entry name" value="LexA-like"/>
</dbReference>
<dbReference type="InterPro" id="IPR036286">
    <property type="entry name" value="LexA/Signal_pep-like_sf"/>
</dbReference>
<dbReference type="InterPro" id="IPR006199">
    <property type="entry name" value="LexA_DNA-bd_dom"/>
</dbReference>
<dbReference type="InterPro" id="IPR050077">
    <property type="entry name" value="LexA_repressor"/>
</dbReference>
<dbReference type="InterPro" id="IPR006197">
    <property type="entry name" value="Peptidase_S24_LexA"/>
</dbReference>
<dbReference type="InterPro" id="IPR015927">
    <property type="entry name" value="Peptidase_S24_S26A/B/C"/>
</dbReference>
<dbReference type="InterPro" id="IPR036388">
    <property type="entry name" value="WH-like_DNA-bd_sf"/>
</dbReference>
<dbReference type="InterPro" id="IPR036390">
    <property type="entry name" value="WH_DNA-bd_sf"/>
</dbReference>
<dbReference type="NCBIfam" id="TIGR00498">
    <property type="entry name" value="lexA"/>
    <property type="match status" value="1"/>
</dbReference>
<dbReference type="PANTHER" id="PTHR33516">
    <property type="entry name" value="LEXA REPRESSOR"/>
    <property type="match status" value="1"/>
</dbReference>
<dbReference type="PANTHER" id="PTHR33516:SF2">
    <property type="entry name" value="LEXA REPRESSOR-RELATED"/>
    <property type="match status" value="1"/>
</dbReference>
<dbReference type="Pfam" id="PF01726">
    <property type="entry name" value="LexA_DNA_bind"/>
    <property type="match status" value="1"/>
</dbReference>
<dbReference type="Pfam" id="PF00717">
    <property type="entry name" value="Peptidase_S24"/>
    <property type="match status" value="1"/>
</dbReference>
<dbReference type="PRINTS" id="PR00726">
    <property type="entry name" value="LEXASERPTASE"/>
</dbReference>
<dbReference type="SUPFAM" id="SSF51306">
    <property type="entry name" value="LexA/Signal peptidase"/>
    <property type="match status" value="1"/>
</dbReference>
<dbReference type="SUPFAM" id="SSF46785">
    <property type="entry name" value="Winged helix' DNA-binding domain"/>
    <property type="match status" value="1"/>
</dbReference>
<feature type="chain" id="PRO_0000322716" description="LexA repressor">
    <location>
        <begin position="1"/>
        <end position="215"/>
    </location>
</feature>
<feature type="DNA-binding region" description="H-T-H motif" evidence="1">
    <location>
        <begin position="28"/>
        <end position="48"/>
    </location>
</feature>
<feature type="active site" description="For autocatalytic cleavage activity" evidence="1">
    <location>
        <position position="133"/>
    </location>
</feature>
<feature type="active site" description="For autocatalytic cleavage activity" evidence="1">
    <location>
        <position position="170"/>
    </location>
</feature>
<feature type="site" description="Cleavage; by autolysis" evidence="1">
    <location>
        <begin position="98"/>
        <end position="99"/>
    </location>
</feature>
<name>LEXA_BURP1</name>
<keyword id="KW-0068">Autocatalytic cleavage</keyword>
<keyword id="KW-0227">DNA damage</keyword>
<keyword id="KW-0234">DNA repair</keyword>
<keyword id="KW-0235">DNA replication</keyword>
<keyword id="KW-0238">DNA-binding</keyword>
<keyword id="KW-0378">Hydrolase</keyword>
<keyword id="KW-0678">Repressor</keyword>
<keyword id="KW-0742">SOS response</keyword>
<keyword id="KW-0804">Transcription</keyword>
<keyword id="KW-0805">Transcription regulation</keyword>
<comment type="function">
    <text evidence="1">Represses a number of genes involved in the response to DNA damage (SOS response), including recA and lexA. In the presence of single-stranded DNA, RecA interacts with LexA causing an autocatalytic cleavage which disrupts the DNA-binding part of LexA, leading to derepression of the SOS regulon and eventually DNA repair.</text>
</comment>
<comment type="catalytic activity">
    <reaction evidence="1">
        <text>Hydrolysis of Ala-|-Gly bond in repressor LexA.</text>
        <dbReference type="EC" id="3.4.21.88"/>
    </reaction>
</comment>
<comment type="subunit">
    <text evidence="1">Homodimer.</text>
</comment>
<comment type="similarity">
    <text evidence="1">Belongs to the peptidase S24 family.</text>
</comment>
<comment type="sequence caution" evidence="2">
    <conflict type="erroneous initiation">
        <sequence resource="EMBL-CDS" id="ABA48742"/>
    </conflict>
</comment>
<organism>
    <name type="scientific">Burkholderia pseudomallei (strain 1710b)</name>
    <dbReference type="NCBI Taxonomy" id="320372"/>
    <lineage>
        <taxon>Bacteria</taxon>
        <taxon>Pseudomonadati</taxon>
        <taxon>Pseudomonadota</taxon>
        <taxon>Betaproteobacteria</taxon>
        <taxon>Burkholderiales</taxon>
        <taxon>Burkholderiaceae</taxon>
        <taxon>Burkholderia</taxon>
        <taxon>pseudomallei group</taxon>
    </lineage>
</organism>
<evidence type="ECO:0000255" key="1">
    <source>
        <dbReference type="HAMAP-Rule" id="MF_00015"/>
    </source>
</evidence>
<evidence type="ECO:0000305" key="2"/>
<protein>
    <recommendedName>
        <fullName evidence="1">LexA repressor</fullName>
        <ecNumber evidence="1">3.4.21.88</ecNumber>
    </recommendedName>
</protein>
<sequence>MIKLTARQQQVFDLIRRAIERSGFPPTRAEIAAELGFSSPNAAEEHLRALARKGVIELAAGASRGIRLLGIDDAPHQLTLPHAALMQLSLPLVGRVAAGSPILAQEHISQHYACDPALFSSKPDYLLKVRGLSMRDAGILDGDLLAVQKRTEAKDGQIIVARLGDDVTVKRLKRRPGGVELIAENPDYENIFVKAGSAEFALEGIAVGLIRPGEF</sequence>
<gene>
    <name evidence="1" type="primary">lexA</name>
    <name type="ordered locus">BURPS1710b_2012</name>
</gene>
<proteinExistence type="inferred from homology"/>
<reference key="1">
    <citation type="journal article" date="2010" name="Genome Biol. Evol.">
        <title>Continuing evolution of Burkholderia mallei through genome reduction and large-scale rearrangements.</title>
        <authorList>
            <person name="Losada L."/>
            <person name="Ronning C.M."/>
            <person name="DeShazer D."/>
            <person name="Woods D."/>
            <person name="Fedorova N."/>
            <person name="Kim H.S."/>
            <person name="Shabalina S.A."/>
            <person name="Pearson T.R."/>
            <person name="Brinkac L."/>
            <person name="Tan P."/>
            <person name="Nandi T."/>
            <person name="Crabtree J."/>
            <person name="Badger J."/>
            <person name="Beckstrom-Sternberg S."/>
            <person name="Saqib M."/>
            <person name="Schutzer S.E."/>
            <person name="Keim P."/>
            <person name="Nierman W.C."/>
        </authorList>
    </citation>
    <scope>NUCLEOTIDE SEQUENCE [LARGE SCALE GENOMIC DNA]</scope>
    <source>
        <strain>1710b</strain>
    </source>
</reference>
<accession>Q3JSP6</accession>